<feature type="chain" id="PRO_0000305791" description="Bifunctional protein FolD 2">
    <location>
        <begin position="1"/>
        <end position="297"/>
    </location>
</feature>
<feature type="binding site" evidence="1">
    <location>
        <begin position="172"/>
        <end position="174"/>
    </location>
    <ligand>
        <name>NADP(+)</name>
        <dbReference type="ChEBI" id="CHEBI:58349"/>
    </ligand>
</feature>
<feature type="binding site" evidence="1">
    <location>
        <position position="199"/>
    </location>
    <ligand>
        <name>NADP(+)</name>
        <dbReference type="ChEBI" id="CHEBI:58349"/>
    </ligand>
</feature>
<feature type="binding site" evidence="1">
    <location>
        <position position="240"/>
    </location>
    <ligand>
        <name>NADP(+)</name>
        <dbReference type="ChEBI" id="CHEBI:58349"/>
    </ligand>
</feature>
<name>FOLD2_PAEAT</name>
<proteinExistence type="inferred from homology"/>
<evidence type="ECO:0000255" key="1">
    <source>
        <dbReference type="HAMAP-Rule" id="MF_01576"/>
    </source>
</evidence>
<protein>
    <recommendedName>
        <fullName evidence="1">Bifunctional protein FolD 2</fullName>
    </recommendedName>
    <domain>
        <recommendedName>
            <fullName evidence="1">Methylenetetrahydrofolate dehydrogenase</fullName>
            <ecNumber evidence="1">1.5.1.5</ecNumber>
        </recommendedName>
    </domain>
    <domain>
        <recommendedName>
            <fullName evidence="1">Methenyltetrahydrofolate cyclohydrolase</fullName>
            <ecNumber evidence="1">3.5.4.9</ecNumber>
        </recommendedName>
    </domain>
</protein>
<accession>A1R451</accession>
<comment type="function">
    <text evidence="1">Catalyzes the oxidation of 5,10-methylenetetrahydrofolate to 5,10-methenyltetrahydrofolate and then the hydrolysis of 5,10-methenyltetrahydrofolate to 10-formyltetrahydrofolate.</text>
</comment>
<comment type="catalytic activity">
    <reaction evidence="1">
        <text>(6R)-5,10-methylene-5,6,7,8-tetrahydrofolate + NADP(+) = (6R)-5,10-methenyltetrahydrofolate + NADPH</text>
        <dbReference type="Rhea" id="RHEA:22812"/>
        <dbReference type="ChEBI" id="CHEBI:15636"/>
        <dbReference type="ChEBI" id="CHEBI:57455"/>
        <dbReference type="ChEBI" id="CHEBI:57783"/>
        <dbReference type="ChEBI" id="CHEBI:58349"/>
        <dbReference type="EC" id="1.5.1.5"/>
    </reaction>
</comment>
<comment type="catalytic activity">
    <reaction evidence="1">
        <text>(6R)-5,10-methenyltetrahydrofolate + H2O = (6R)-10-formyltetrahydrofolate + H(+)</text>
        <dbReference type="Rhea" id="RHEA:23700"/>
        <dbReference type="ChEBI" id="CHEBI:15377"/>
        <dbReference type="ChEBI" id="CHEBI:15378"/>
        <dbReference type="ChEBI" id="CHEBI:57455"/>
        <dbReference type="ChEBI" id="CHEBI:195366"/>
        <dbReference type="EC" id="3.5.4.9"/>
    </reaction>
</comment>
<comment type="pathway">
    <text evidence="1">One-carbon metabolism; tetrahydrofolate interconversion.</text>
</comment>
<comment type="subunit">
    <text evidence="1">Homodimer.</text>
</comment>
<comment type="similarity">
    <text evidence="1">Belongs to the tetrahydrofolate dehydrogenase/cyclohydrolase family.</text>
</comment>
<keyword id="KW-0028">Amino-acid biosynthesis</keyword>
<keyword id="KW-0368">Histidine biosynthesis</keyword>
<keyword id="KW-0378">Hydrolase</keyword>
<keyword id="KW-0486">Methionine biosynthesis</keyword>
<keyword id="KW-0511">Multifunctional enzyme</keyword>
<keyword id="KW-0521">NADP</keyword>
<keyword id="KW-0554">One-carbon metabolism</keyword>
<keyword id="KW-0560">Oxidoreductase</keyword>
<keyword id="KW-0658">Purine biosynthesis</keyword>
<sequence>MTQSTAQILDGKATAAAIKAELTTRVSVLAAKGIVPGLGTILVGSDPGSTWYVGGKHKDCAEVGIQSIRRDLPEDISQEDLLEVVRELNDNPECTGYIVQLPLPKHIDQDVILEAMDPDKDADGLHPMNLGRLVANVNGEMKSPLPCTPKGCVELLRRHNIELKGKRVLVVGRGVTIGRPIGLLLTRKEVNATVILAHTGTVDLPAELKQADVVIAAAGVPHMIKAEDLKPGAVVLDVGVSRVDDGNGKAVVTGDVDPAAADVAAWLSPNPGGVGPMTRAMLLANVVESAERQAGIA</sequence>
<dbReference type="EC" id="1.5.1.5" evidence="1"/>
<dbReference type="EC" id="3.5.4.9" evidence="1"/>
<dbReference type="EMBL" id="CP000474">
    <property type="protein sequence ID" value="ABM06658.1"/>
    <property type="molecule type" value="Genomic_DNA"/>
</dbReference>
<dbReference type="RefSeq" id="WP_011773960.1">
    <property type="nucleotide sequence ID" value="NC_008711.1"/>
</dbReference>
<dbReference type="SMR" id="A1R451"/>
<dbReference type="STRING" id="290340.AAur_1228"/>
<dbReference type="KEGG" id="aau:AAur_1228"/>
<dbReference type="eggNOG" id="COG0190">
    <property type="taxonomic scope" value="Bacteria"/>
</dbReference>
<dbReference type="HOGENOM" id="CLU_034045_3_0_11"/>
<dbReference type="OrthoDB" id="9803580at2"/>
<dbReference type="UniPathway" id="UPA00193"/>
<dbReference type="Proteomes" id="UP000000637">
    <property type="component" value="Chromosome"/>
</dbReference>
<dbReference type="GO" id="GO:0005829">
    <property type="term" value="C:cytosol"/>
    <property type="evidence" value="ECO:0007669"/>
    <property type="project" value="TreeGrafter"/>
</dbReference>
<dbReference type="GO" id="GO:0004477">
    <property type="term" value="F:methenyltetrahydrofolate cyclohydrolase activity"/>
    <property type="evidence" value="ECO:0007669"/>
    <property type="project" value="UniProtKB-UniRule"/>
</dbReference>
<dbReference type="GO" id="GO:0004488">
    <property type="term" value="F:methylenetetrahydrofolate dehydrogenase (NADP+) activity"/>
    <property type="evidence" value="ECO:0007669"/>
    <property type="project" value="UniProtKB-UniRule"/>
</dbReference>
<dbReference type="GO" id="GO:0000105">
    <property type="term" value="P:L-histidine biosynthetic process"/>
    <property type="evidence" value="ECO:0007669"/>
    <property type="project" value="UniProtKB-KW"/>
</dbReference>
<dbReference type="GO" id="GO:0009086">
    <property type="term" value="P:methionine biosynthetic process"/>
    <property type="evidence" value="ECO:0007669"/>
    <property type="project" value="UniProtKB-KW"/>
</dbReference>
<dbReference type="GO" id="GO:0006164">
    <property type="term" value="P:purine nucleotide biosynthetic process"/>
    <property type="evidence" value="ECO:0007669"/>
    <property type="project" value="UniProtKB-KW"/>
</dbReference>
<dbReference type="GO" id="GO:0035999">
    <property type="term" value="P:tetrahydrofolate interconversion"/>
    <property type="evidence" value="ECO:0007669"/>
    <property type="project" value="UniProtKB-UniRule"/>
</dbReference>
<dbReference type="CDD" id="cd01080">
    <property type="entry name" value="NAD_bind_m-THF_DH_Cyclohyd"/>
    <property type="match status" value="1"/>
</dbReference>
<dbReference type="FunFam" id="3.40.50.10860:FF:000005">
    <property type="entry name" value="C-1-tetrahydrofolate synthase, cytoplasmic, putative"/>
    <property type="match status" value="1"/>
</dbReference>
<dbReference type="Gene3D" id="3.40.50.10860">
    <property type="entry name" value="Leucine Dehydrogenase, chain A, domain 1"/>
    <property type="match status" value="1"/>
</dbReference>
<dbReference type="Gene3D" id="3.40.50.720">
    <property type="entry name" value="NAD(P)-binding Rossmann-like Domain"/>
    <property type="match status" value="1"/>
</dbReference>
<dbReference type="HAMAP" id="MF_01576">
    <property type="entry name" value="THF_DHG_CYH"/>
    <property type="match status" value="1"/>
</dbReference>
<dbReference type="InterPro" id="IPR046346">
    <property type="entry name" value="Aminoacid_DH-like_N_sf"/>
</dbReference>
<dbReference type="InterPro" id="IPR036291">
    <property type="entry name" value="NAD(P)-bd_dom_sf"/>
</dbReference>
<dbReference type="InterPro" id="IPR000672">
    <property type="entry name" value="THF_DH/CycHdrlase"/>
</dbReference>
<dbReference type="InterPro" id="IPR020630">
    <property type="entry name" value="THF_DH/CycHdrlase_cat_dom"/>
</dbReference>
<dbReference type="InterPro" id="IPR020631">
    <property type="entry name" value="THF_DH/CycHdrlase_NAD-bd_dom"/>
</dbReference>
<dbReference type="NCBIfam" id="NF010789">
    <property type="entry name" value="PRK14193.1"/>
    <property type="match status" value="1"/>
</dbReference>
<dbReference type="PANTHER" id="PTHR48099:SF5">
    <property type="entry name" value="C-1-TETRAHYDROFOLATE SYNTHASE, CYTOPLASMIC"/>
    <property type="match status" value="1"/>
</dbReference>
<dbReference type="PANTHER" id="PTHR48099">
    <property type="entry name" value="C-1-TETRAHYDROFOLATE SYNTHASE, CYTOPLASMIC-RELATED"/>
    <property type="match status" value="1"/>
</dbReference>
<dbReference type="Pfam" id="PF00763">
    <property type="entry name" value="THF_DHG_CYH"/>
    <property type="match status" value="1"/>
</dbReference>
<dbReference type="Pfam" id="PF02882">
    <property type="entry name" value="THF_DHG_CYH_C"/>
    <property type="match status" value="1"/>
</dbReference>
<dbReference type="PRINTS" id="PR00085">
    <property type="entry name" value="THFDHDRGNASE"/>
</dbReference>
<dbReference type="SUPFAM" id="SSF53223">
    <property type="entry name" value="Aminoacid dehydrogenase-like, N-terminal domain"/>
    <property type="match status" value="1"/>
</dbReference>
<dbReference type="SUPFAM" id="SSF51735">
    <property type="entry name" value="NAD(P)-binding Rossmann-fold domains"/>
    <property type="match status" value="1"/>
</dbReference>
<gene>
    <name evidence="1" type="primary">folD2</name>
    <name type="ordered locus">AAur_1228</name>
</gene>
<organism>
    <name type="scientific">Paenarthrobacter aurescens (strain TC1)</name>
    <dbReference type="NCBI Taxonomy" id="290340"/>
    <lineage>
        <taxon>Bacteria</taxon>
        <taxon>Bacillati</taxon>
        <taxon>Actinomycetota</taxon>
        <taxon>Actinomycetes</taxon>
        <taxon>Micrococcales</taxon>
        <taxon>Micrococcaceae</taxon>
        <taxon>Paenarthrobacter</taxon>
    </lineage>
</organism>
<reference key="1">
    <citation type="journal article" date="2006" name="PLoS Genet.">
        <title>Secrets of soil survival revealed by the genome sequence of Arthrobacter aurescens TC1.</title>
        <authorList>
            <person name="Mongodin E.F."/>
            <person name="Shapir N."/>
            <person name="Daugherty S.C."/>
            <person name="DeBoy R.T."/>
            <person name="Emerson J.B."/>
            <person name="Shvartzbeyn A."/>
            <person name="Radune D."/>
            <person name="Vamathevan J."/>
            <person name="Riggs F."/>
            <person name="Grinberg V."/>
            <person name="Khouri H.M."/>
            <person name="Wackett L.P."/>
            <person name="Nelson K.E."/>
            <person name="Sadowsky M.J."/>
        </authorList>
    </citation>
    <scope>NUCLEOTIDE SEQUENCE [LARGE SCALE GENOMIC DNA]</scope>
    <source>
        <strain>TC1</strain>
    </source>
</reference>